<name>YGFZ_HAMD5</name>
<organism>
    <name type="scientific">Hamiltonella defensa subsp. Acyrthosiphon pisum (strain 5AT)</name>
    <dbReference type="NCBI Taxonomy" id="572265"/>
    <lineage>
        <taxon>Bacteria</taxon>
        <taxon>Pseudomonadati</taxon>
        <taxon>Pseudomonadota</taxon>
        <taxon>Gammaproteobacteria</taxon>
        <taxon>Enterobacterales</taxon>
        <taxon>Enterobacteriaceae</taxon>
        <taxon>aphid secondary symbionts</taxon>
        <taxon>Candidatus Hamiltonella</taxon>
    </lineage>
</organism>
<comment type="function">
    <text evidence="1">Folate-binding protein involved in regulating the level of ATP-DnaA and in the modification of some tRNAs. It is probably a key factor in regulatory networks that act via tRNA modification, such as initiation of chromosomal replication.</text>
</comment>
<comment type="subcellular location">
    <subcellularLocation>
        <location evidence="1">Cytoplasm</location>
    </subcellularLocation>
</comment>
<comment type="similarity">
    <text evidence="1">Belongs to the tRNA-modifying YgfZ family.</text>
</comment>
<dbReference type="EMBL" id="CP001277">
    <property type="protein sequence ID" value="ACQ68645.1"/>
    <property type="molecule type" value="Genomic_DNA"/>
</dbReference>
<dbReference type="RefSeq" id="WP_015874390.1">
    <property type="nucleotide sequence ID" value="NC_012751.1"/>
</dbReference>
<dbReference type="SMR" id="C4K7V2"/>
<dbReference type="STRING" id="572265.HDEF_2079"/>
<dbReference type="GeneID" id="66261621"/>
<dbReference type="KEGG" id="hde:HDEF_2079"/>
<dbReference type="eggNOG" id="COG0354">
    <property type="taxonomic scope" value="Bacteria"/>
</dbReference>
<dbReference type="HOGENOM" id="CLU_007884_6_1_6"/>
<dbReference type="Proteomes" id="UP000002334">
    <property type="component" value="Chromosome"/>
</dbReference>
<dbReference type="GO" id="GO:0005737">
    <property type="term" value="C:cytoplasm"/>
    <property type="evidence" value="ECO:0007669"/>
    <property type="project" value="UniProtKB-SubCell"/>
</dbReference>
<dbReference type="GO" id="GO:0005542">
    <property type="term" value="F:folic acid binding"/>
    <property type="evidence" value="ECO:0007669"/>
    <property type="project" value="UniProtKB-UniRule"/>
</dbReference>
<dbReference type="GO" id="GO:0016226">
    <property type="term" value="P:iron-sulfur cluster assembly"/>
    <property type="evidence" value="ECO:0007669"/>
    <property type="project" value="TreeGrafter"/>
</dbReference>
<dbReference type="GO" id="GO:0009451">
    <property type="term" value="P:RNA modification"/>
    <property type="evidence" value="ECO:0007669"/>
    <property type="project" value="InterPro"/>
</dbReference>
<dbReference type="GO" id="GO:0008033">
    <property type="term" value="P:tRNA processing"/>
    <property type="evidence" value="ECO:0007669"/>
    <property type="project" value="UniProtKB-UniRule"/>
</dbReference>
<dbReference type="FunFam" id="2.40.30.160:FF:000001">
    <property type="entry name" value="tRNA-modifying protein YgfZ"/>
    <property type="match status" value="1"/>
</dbReference>
<dbReference type="Gene3D" id="2.40.30.160">
    <property type="match status" value="1"/>
</dbReference>
<dbReference type="Gene3D" id="3.30.70.1630">
    <property type="match status" value="1"/>
</dbReference>
<dbReference type="Gene3D" id="3.30.70.1400">
    <property type="entry name" value="Aminomethyltransferase beta-barrel domains"/>
    <property type="match status" value="1"/>
</dbReference>
<dbReference type="HAMAP" id="MF_01175">
    <property type="entry name" value="tRNA_modifying_YgfZ"/>
    <property type="match status" value="1"/>
</dbReference>
<dbReference type="InterPro" id="IPR006222">
    <property type="entry name" value="GCV_T_N"/>
</dbReference>
<dbReference type="InterPro" id="IPR029043">
    <property type="entry name" value="GcvT/YgfZ_C"/>
</dbReference>
<dbReference type="InterPro" id="IPR023758">
    <property type="entry name" value="tRNA-modifying_YgfZ"/>
</dbReference>
<dbReference type="InterPro" id="IPR045179">
    <property type="entry name" value="YgfZ/GcvT"/>
</dbReference>
<dbReference type="InterPro" id="IPR017703">
    <property type="entry name" value="YgfZ/GcvT_CS"/>
</dbReference>
<dbReference type="InterPro" id="IPR048451">
    <property type="entry name" value="YgfZ_barrel"/>
</dbReference>
<dbReference type="NCBIfam" id="NF007110">
    <property type="entry name" value="PRK09559.1"/>
    <property type="match status" value="1"/>
</dbReference>
<dbReference type="NCBIfam" id="TIGR03317">
    <property type="entry name" value="ygfZ_signature"/>
    <property type="match status" value="1"/>
</dbReference>
<dbReference type="PANTHER" id="PTHR22602">
    <property type="entry name" value="TRANSFERASE CAF17, MITOCHONDRIAL-RELATED"/>
    <property type="match status" value="1"/>
</dbReference>
<dbReference type="PANTHER" id="PTHR22602:SF0">
    <property type="entry name" value="TRANSFERASE CAF17, MITOCHONDRIAL-RELATED"/>
    <property type="match status" value="1"/>
</dbReference>
<dbReference type="Pfam" id="PF01571">
    <property type="entry name" value="GCV_T"/>
    <property type="match status" value="1"/>
</dbReference>
<dbReference type="Pfam" id="PF21130">
    <property type="entry name" value="YgfZ_barrel"/>
    <property type="match status" value="1"/>
</dbReference>
<dbReference type="SUPFAM" id="SSF101790">
    <property type="entry name" value="Aminomethyltransferase beta-barrel domain"/>
    <property type="match status" value="1"/>
</dbReference>
<dbReference type="SUPFAM" id="SSF103025">
    <property type="entry name" value="Folate-binding domain"/>
    <property type="match status" value="1"/>
</dbReference>
<keyword id="KW-0963">Cytoplasm</keyword>
<keyword id="KW-0290">Folate-binding</keyword>
<keyword id="KW-0819">tRNA processing</keyword>
<evidence type="ECO:0000255" key="1">
    <source>
        <dbReference type="HAMAP-Rule" id="MF_01175"/>
    </source>
</evidence>
<proteinExistence type="inferred from homology"/>
<accession>C4K7V2</accession>
<sequence>MIYQSLFSHQASLPSEQLPFTVILLNDWGLIRVTGKDRVKYLQGQITLDVPLLKENQHILGAHCDPKGKILSTVRLFHYLKGLAFITRKSLLHDELMELRKYAVFSKVEIDIAESTVLLGIAGDQARKVLKNCFEKLPTETEPVVHEDDYSLLHFSSPRERFLLVSQAFKEGDFLIQKLQDQAVFRSSEQWLALDIESGFPIIDAKNKTQFIPQAANLKALGGISFTKGCYTGQEVVARTEYRGVNKKALYWLTGKACRVPDVGEALEIQMEEDYRRTGVVLAAVKLQDGSLWVQAILNHDFQKDSILRVKGDENGRLMISHRSFKKFEPSSNPIA</sequence>
<protein>
    <recommendedName>
        <fullName evidence="1">tRNA-modifying protein YgfZ</fullName>
    </recommendedName>
</protein>
<gene>
    <name type="ordered locus">HDEF_2079</name>
</gene>
<reference key="1">
    <citation type="journal article" date="2009" name="Proc. Natl. Acad. Sci. U.S.A.">
        <title>Hamiltonella defensa, genome evolution of protective bacterial endosymbiont from pathogenic ancestors.</title>
        <authorList>
            <person name="Degnan P.H."/>
            <person name="Yu Y."/>
            <person name="Sisneros N."/>
            <person name="Wing R.A."/>
            <person name="Moran N.A."/>
        </authorList>
    </citation>
    <scope>NUCLEOTIDE SEQUENCE [LARGE SCALE GENOMIC DNA]</scope>
    <source>
        <strain>5AT</strain>
    </source>
</reference>
<feature type="chain" id="PRO_1000213746" description="tRNA-modifying protein YgfZ">
    <location>
        <begin position="1"/>
        <end position="336"/>
    </location>
</feature>
<feature type="binding site" evidence="1">
    <location>
        <position position="28"/>
    </location>
    <ligand>
        <name>folate</name>
        <dbReference type="ChEBI" id="CHEBI:62501"/>
    </ligand>
</feature>
<feature type="binding site" evidence="1">
    <location>
        <position position="191"/>
    </location>
    <ligand>
        <name>folate</name>
        <dbReference type="ChEBI" id="CHEBI:62501"/>
    </ligand>
</feature>